<reference evidence="7" key="1">
    <citation type="journal article" date="1997" name="Nature">
        <title>The complete genome sequence of the gastric pathogen Helicobacter pylori.</title>
        <authorList>
            <person name="Tomb J.-F."/>
            <person name="White O."/>
            <person name="Kerlavage A.R."/>
            <person name="Clayton R.A."/>
            <person name="Sutton G.G."/>
            <person name="Fleischmann R.D."/>
            <person name="Ketchum K.A."/>
            <person name="Klenk H.-P."/>
            <person name="Gill S.R."/>
            <person name="Dougherty B.A."/>
            <person name="Nelson K.E."/>
            <person name="Quackenbush J."/>
            <person name="Zhou L."/>
            <person name="Kirkness E.F."/>
            <person name="Peterson S.N."/>
            <person name="Loftus B.J."/>
            <person name="Richardson D.L."/>
            <person name="Dodson R.J."/>
            <person name="Khalak H.G."/>
            <person name="Glodek A."/>
            <person name="McKenney K."/>
            <person name="FitzGerald L.M."/>
            <person name="Lee N."/>
            <person name="Adams M.D."/>
            <person name="Hickey E.K."/>
            <person name="Berg D.E."/>
            <person name="Gocayne J.D."/>
            <person name="Utterback T.R."/>
            <person name="Peterson J.D."/>
            <person name="Kelley J.M."/>
            <person name="Cotton M.D."/>
            <person name="Weidman J.F."/>
            <person name="Fujii C."/>
            <person name="Bowman C."/>
            <person name="Watthey L."/>
            <person name="Wallin E."/>
            <person name="Hayes W.S."/>
            <person name="Borodovsky M."/>
            <person name="Karp P.D."/>
            <person name="Smith H.O."/>
            <person name="Fraser C.M."/>
            <person name="Venter J.C."/>
        </authorList>
    </citation>
    <scope>NUCLEOTIDE SEQUENCE [LARGE SCALE GENOMIC DNA]</scope>
    <source>
        <strain>ATCC 700392 / 26695</strain>
    </source>
</reference>
<reference evidence="8" key="2">
    <citation type="submission" date="2012-10" db="EMBL/GenBank/DDBJ databases">
        <title>Draft genome of Helicobacter pylori.</title>
        <authorList>
            <person name="Manolov A."/>
            <person name="Prihodko E."/>
            <person name="Larin A."/>
            <person name="Karpova I."/>
            <person name="Semashko T."/>
            <person name="Alexeev D."/>
            <person name="Kostrjukova E."/>
            <person name="Govorun V."/>
        </authorList>
    </citation>
    <scope>NUCLEOTIDE SEQUENCE [LARGE SCALE GENOMIC DNA]</scope>
    <source>
        <strain evidence="8">ATCC 700392 / 26695</strain>
    </source>
</reference>
<reference evidence="6" key="3">
    <citation type="journal article" date="2000" name="J. Bacteriol.">
        <title>Mutational analysis of genes encoding the early flagellar components of Helicobacter pylori: evidence for transcriptional regulation of flagellin A biosynthesis.</title>
        <authorList>
            <person name="Allan E."/>
            <person name="Dorrell N."/>
            <person name="Foynes S."/>
            <person name="Anyim M."/>
            <person name="Wren B.W."/>
        </authorList>
    </citation>
    <scope>FUNCTION</scope>
    <scope>DISRUPTION PHENOTYPE</scope>
    <source>
        <strain evidence="3">SS1</strain>
    </source>
</reference>
<reference evidence="6 9" key="4">
    <citation type="journal article" date="2012" name="Structure">
        <title>Multiple conformations of the FliG C-terminal domain provide insight into flagellar motor switching.</title>
        <authorList>
            <person name="Lam K.H."/>
            <person name="Ip W.S."/>
            <person name="Lam Y.W."/>
            <person name="Chan S.O."/>
            <person name="Ling T.K."/>
            <person name="Au S.W."/>
        </authorList>
    </citation>
    <scope>X-RAY CRYSTALLOGRAPHY (2.60 ANGSTROMS) OF 86-343</scope>
    <scope>FUNCTION</scope>
    <scope>MOTIF</scope>
    <scope>MUTAGENESIS OF ARG-209; ARG-217; SER-222; GLU-243 AND GLN-325</scope>
    <source>
        <strain evidence="4">ATCC 700392 / 26695</strain>
    </source>
</reference>
<accession>O25119</accession>
<dbReference type="EMBL" id="AE000511">
    <property type="protein sequence ID" value="AAD07420.1"/>
    <property type="molecule type" value="Genomic_DNA"/>
</dbReference>
<dbReference type="EMBL" id="CP003904">
    <property type="protein sequence ID" value="AFV41574.1"/>
    <property type="molecule type" value="Genomic_DNA"/>
</dbReference>
<dbReference type="PIR" id="H64563">
    <property type="entry name" value="H64563"/>
</dbReference>
<dbReference type="RefSeq" id="NP_207150.1">
    <property type="nucleotide sequence ID" value="NC_000915.1"/>
</dbReference>
<dbReference type="RefSeq" id="WP_000201853.1">
    <property type="nucleotide sequence ID" value="NC_018939.1"/>
</dbReference>
<dbReference type="PDB" id="3USW">
    <property type="method" value="X-ray"/>
    <property type="resolution" value="2.60 A"/>
    <property type="chains" value="A=86-343"/>
</dbReference>
<dbReference type="PDB" id="3USY">
    <property type="method" value="X-ray"/>
    <property type="resolution" value="2.71 A"/>
    <property type="chains" value="A/B=116-343"/>
</dbReference>
<dbReference type="PDB" id="4FQ0">
    <property type="method" value="X-ray"/>
    <property type="resolution" value="2.82 A"/>
    <property type="chains" value="C/D=116-205"/>
</dbReference>
<dbReference type="PDB" id="5WUJ">
    <property type="method" value="X-ray"/>
    <property type="resolution" value="2.30 A"/>
    <property type="chains" value="B=7-111"/>
</dbReference>
<dbReference type="PDBsum" id="3USW"/>
<dbReference type="PDBsum" id="3USY"/>
<dbReference type="PDBsum" id="4FQ0"/>
<dbReference type="PDBsum" id="5WUJ"/>
<dbReference type="SMR" id="O25119"/>
<dbReference type="DIP" id="DIP-3534N"/>
<dbReference type="FunCoup" id="O25119">
    <property type="interactions" value="51"/>
</dbReference>
<dbReference type="IntAct" id="O25119">
    <property type="interactions" value="5"/>
</dbReference>
<dbReference type="MINT" id="O25119"/>
<dbReference type="STRING" id="85962.HP_0352"/>
<dbReference type="PaxDb" id="85962-C694_01785"/>
<dbReference type="EnsemblBacteria" id="AAD07420">
    <property type="protein sequence ID" value="AAD07420"/>
    <property type="gene ID" value="HP_0352"/>
</dbReference>
<dbReference type="KEGG" id="heo:C694_01785"/>
<dbReference type="KEGG" id="hpy:HP_0352"/>
<dbReference type="PATRIC" id="fig|85962.47.peg.375"/>
<dbReference type="eggNOG" id="COG1536">
    <property type="taxonomic scope" value="Bacteria"/>
</dbReference>
<dbReference type="HOGENOM" id="CLU_047835_0_0_7"/>
<dbReference type="InParanoid" id="O25119"/>
<dbReference type="OrthoDB" id="9780302at2"/>
<dbReference type="PhylomeDB" id="O25119"/>
<dbReference type="EvolutionaryTrace" id="O25119"/>
<dbReference type="Proteomes" id="UP000000429">
    <property type="component" value="Chromosome"/>
</dbReference>
<dbReference type="GO" id="GO:0009288">
    <property type="term" value="C:bacterial-type flagellum"/>
    <property type="evidence" value="ECO:0000315"/>
    <property type="project" value="UniProtKB"/>
</dbReference>
<dbReference type="GO" id="GO:0009425">
    <property type="term" value="C:bacterial-type flagellum basal body"/>
    <property type="evidence" value="ECO:0007669"/>
    <property type="project" value="UniProtKB-SubCell"/>
</dbReference>
<dbReference type="GO" id="GO:0005886">
    <property type="term" value="C:plasma membrane"/>
    <property type="evidence" value="ECO:0007669"/>
    <property type="project" value="UniProtKB-SubCell"/>
</dbReference>
<dbReference type="GO" id="GO:0003774">
    <property type="term" value="F:cytoskeletal motor activity"/>
    <property type="evidence" value="ECO:0007669"/>
    <property type="project" value="InterPro"/>
</dbReference>
<dbReference type="GO" id="GO:0071973">
    <property type="term" value="P:bacterial-type flagellum-dependent cell motility"/>
    <property type="evidence" value="ECO:0000318"/>
    <property type="project" value="GO_Central"/>
</dbReference>
<dbReference type="GO" id="GO:0071978">
    <property type="term" value="P:bacterial-type flagellum-dependent swarming motility"/>
    <property type="evidence" value="ECO:0000315"/>
    <property type="project" value="UniProtKB"/>
</dbReference>
<dbReference type="GO" id="GO:0006935">
    <property type="term" value="P:chemotaxis"/>
    <property type="evidence" value="ECO:0007669"/>
    <property type="project" value="UniProtKB-KW"/>
</dbReference>
<dbReference type="Gene3D" id="1.10.220.30">
    <property type="match status" value="3"/>
</dbReference>
<dbReference type="Gene3D" id="1.20.5.2020">
    <property type="match status" value="1"/>
</dbReference>
<dbReference type="InterPro" id="IPR000090">
    <property type="entry name" value="Flg_Motor_Flig"/>
</dbReference>
<dbReference type="InterPro" id="IPR023087">
    <property type="entry name" value="Flg_Motor_Flig_C"/>
</dbReference>
<dbReference type="InterPro" id="IPR011002">
    <property type="entry name" value="FliG_a-hlx"/>
</dbReference>
<dbReference type="InterPro" id="IPR032779">
    <property type="entry name" value="FliG_M"/>
</dbReference>
<dbReference type="InterPro" id="IPR028263">
    <property type="entry name" value="FliG_N"/>
</dbReference>
<dbReference type="NCBIfam" id="TIGR00207">
    <property type="entry name" value="fliG"/>
    <property type="match status" value="1"/>
</dbReference>
<dbReference type="PANTHER" id="PTHR30534">
    <property type="entry name" value="FLAGELLAR MOTOR SWITCH PROTEIN FLIG"/>
    <property type="match status" value="1"/>
</dbReference>
<dbReference type="PANTHER" id="PTHR30534:SF0">
    <property type="entry name" value="FLAGELLAR MOTOR SWITCH PROTEIN FLIG"/>
    <property type="match status" value="1"/>
</dbReference>
<dbReference type="Pfam" id="PF01706">
    <property type="entry name" value="FliG_C"/>
    <property type="match status" value="1"/>
</dbReference>
<dbReference type="Pfam" id="PF14841">
    <property type="entry name" value="FliG_M"/>
    <property type="match status" value="1"/>
</dbReference>
<dbReference type="Pfam" id="PF14842">
    <property type="entry name" value="FliG_N"/>
    <property type="match status" value="1"/>
</dbReference>
<dbReference type="PIRSF" id="PIRSF003161">
    <property type="entry name" value="FliG"/>
    <property type="match status" value="1"/>
</dbReference>
<dbReference type="PRINTS" id="PR00954">
    <property type="entry name" value="FLGMOTORFLIG"/>
</dbReference>
<dbReference type="SUPFAM" id="SSF48029">
    <property type="entry name" value="FliG"/>
    <property type="match status" value="2"/>
</dbReference>
<evidence type="ECO:0000250" key="1">
    <source>
        <dbReference type="UniProtKB" id="P0ABZ1"/>
    </source>
</evidence>
<evidence type="ECO:0000255" key="2"/>
<evidence type="ECO:0000269" key="3">
    <source>
    </source>
</evidence>
<evidence type="ECO:0000269" key="4">
    <source>
    </source>
</evidence>
<evidence type="ECO:0000269" key="5">
    <source>
    </source>
</evidence>
<evidence type="ECO:0000305" key="6"/>
<evidence type="ECO:0000312" key="7">
    <source>
        <dbReference type="EMBL" id="AAD07420.1"/>
    </source>
</evidence>
<evidence type="ECO:0000312" key="8">
    <source>
        <dbReference type="EMBL" id="AFV41574.1"/>
    </source>
</evidence>
<evidence type="ECO:0000312" key="9">
    <source>
        <dbReference type="PDB" id="3USW"/>
    </source>
</evidence>
<evidence type="ECO:0007829" key="10">
    <source>
        <dbReference type="PDB" id="3USW"/>
    </source>
</evidence>
<evidence type="ECO:0007829" key="11">
    <source>
        <dbReference type="PDB" id="3USY"/>
    </source>
</evidence>
<evidence type="ECO:0007829" key="12">
    <source>
        <dbReference type="PDB" id="5WUJ"/>
    </source>
</evidence>
<sequence>MATKLTPKQKAQLDELSMSEKIAILLIQVGEDTTGEILRHLDIDSITEISKQIVQLNGTDKQIGAAVLEEFFAIFQSNQYINTGGLEYARELLTRTLGSEEAKKVMDKLTKSLQTQKNFAYLGKIKPQQLADFIINEHPQTIALILAHMEAPNAAETLSYFPDEMKAEISIRMANLGEISPQVVKRVSTVLENKLESLTSYKIEVGGLRAVAEIFNRLGQKSAKTTLARIESVDNKLAGAIKEMMFTFEDIVKLDNFAIREILKVADKKDLSLALKTSTKDLTDKFLNNMSSRAAEQFVEEMQYLGAVKIKDVDVAQRKIIEIVQSLQEKGVIQTGEEEDVIE</sequence>
<feature type="chain" id="PRO_0000421839" description="Flagellar motor switch protein FliG">
    <location>
        <begin position="1"/>
        <end position="343"/>
    </location>
</feature>
<feature type="short sequence motif" description="Part of the EHPQR-motif">
    <location>
        <begin position="137"/>
        <end position="140"/>
    </location>
</feature>
<feature type="short sequence motif" description="M-F-X-F motif; its intrinsic flexibility is probably coupled to flagellar rotation" evidence="4">
    <location>
        <begin position="245"/>
        <end position="248"/>
    </location>
</feature>
<feature type="site" description="Part of the EHPQR-motif">
    <location>
        <position position="172"/>
    </location>
</feature>
<feature type="mutagenesis site" description="A prominent downward mobility shift in SDS-PAGE and a reduction in the fluorescence intensity upon 5-iodoacetamidofluorescein (5-IAF) haloalkylation after cysteine cross-linking suggest formation of disulfide bonds, hence closeness of corresponding wild-type residues; when associated with C-325." evidence="4">
    <original>R</original>
    <variation>C</variation>
    <location>
        <position position="209"/>
    </location>
</feature>
<feature type="mutagenesis site" description="A slight downward mobility shift in SDS-PAGE and a reduction in the fluorescence intensity upon 5-iodoacetamidofluorescein (5-IAF) haloalkylation after cysteine cross-linking suggest formation of disulfide bonds, hence closeness of corresponding wild-type residues; when associated with C-325." evidence="4">
    <original>R</original>
    <variation>C</variation>
    <location>
        <position position="217"/>
    </location>
</feature>
<feature type="mutagenesis site" description="A prominent downward mobility shift in SDS-PAGE and a reduction in the fluorescence intensity upon 5-iodoacetamidofluorescein (5-IAF) haloalkylation after cysteine cross-linking suggest formation of disulfide bonds, hence closeness of corresponding wild-type residues; when associated with C-325." evidence="4">
    <original>S</original>
    <variation>C</variation>
    <location>
        <position position="222"/>
    </location>
</feature>
<feature type="mutagenesis site" description="A complete upward mobility shift in SDS-PAGE and a reduction in the fluorescence intensity upon 5-iodoacetamidofluorescein (5-IAF) haloalkylation after cysteine cross-linking suggest formation of disulfide bonds, hence closeness of corresponding wild-type residues; when associated with C-325." evidence="4">
    <original>E</original>
    <variation>C</variation>
    <location>
        <position position="243"/>
    </location>
</feature>
<feature type="mutagenesis site" description="No mobility shift in SDS-PAGE nor reduction in the fluorescence intensity upon 5-iodoacetamidofluorescein (5-IAF) haloalkylation after cysteine cross-linking. A mobility shift and reduction in the fluorescence intensity after cysteine cross-linking suggest formation of disulfide bonds, hence closeness of corresponding wild-type residues; when associated either with C-209; C-217; C-222 or C-243." evidence="4">
    <original>Q</original>
    <variation>C</variation>
    <location>
        <position position="325"/>
    </location>
</feature>
<feature type="helix" evidence="12">
    <location>
        <begin position="8"/>
        <end position="14"/>
    </location>
</feature>
<feature type="helix" evidence="12">
    <location>
        <begin position="18"/>
        <end position="29"/>
    </location>
</feature>
<feature type="helix" evidence="12">
    <location>
        <begin position="31"/>
        <end position="38"/>
    </location>
</feature>
<feature type="helix" evidence="12">
    <location>
        <begin position="43"/>
        <end position="56"/>
    </location>
</feature>
<feature type="helix" evidence="12">
    <location>
        <begin position="61"/>
        <end position="77"/>
    </location>
</feature>
<feature type="helix" evidence="12">
    <location>
        <begin position="85"/>
        <end position="97"/>
    </location>
</feature>
<feature type="helix" evidence="12">
    <location>
        <begin position="99"/>
        <end position="110"/>
    </location>
</feature>
<feature type="turn" evidence="11">
    <location>
        <begin position="116"/>
        <end position="119"/>
    </location>
</feature>
<feature type="helix" evidence="10">
    <location>
        <begin position="120"/>
        <end position="124"/>
    </location>
</feature>
<feature type="helix" evidence="10">
    <location>
        <begin position="127"/>
        <end position="134"/>
    </location>
</feature>
<feature type="helix" evidence="10">
    <location>
        <begin position="139"/>
        <end position="146"/>
    </location>
</feature>
<feature type="helix" evidence="10">
    <location>
        <begin position="151"/>
        <end position="158"/>
    </location>
</feature>
<feature type="helix" evidence="10">
    <location>
        <begin position="163"/>
        <end position="173"/>
    </location>
</feature>
<feature type="helix" evidence="10">
    <location>
        <begin position="181"/>
        <end position="194"/>
    </location>
</feature>
<feature type="helix" evidence="11">
    <location>
        <begin position="196"/>
        <end position="199"/>
    </location>
</feature>
<feature type="helix" evidence="10">
    <location>
        <begin position="208"/>
        <end position="216"/>
    </location>
</feature>
<feature type="helix" evidence="10">
    <location>
        <begin position="220"/>
        <end position="233"/>
    </location>
</feature>
<feature type="helix" evidence="10">
    <location>
        <begin position="235"/>
        <end position="244"/>
    </location>
</feature>
<feature type="helix" evidence="10">
    <location>
        <begin position="248"/>
        <end position="253"/>
    </location>
</feature>
<feature type="helix" evidence="10">
    <location>
        <begin position="256"/>
        <end position="265"/>
    </location>
</feature>
<feature type="helix" evidence="10">
    <location>
        <begin position="268"/>
        <end position="274"/>
    </location>
</feature>
<feature type="helix" evidence="10">
    <location>
        <begin position="275"/>
        <end position="277"/>
    </location>
</feature>
<feature type="helix" evidence="10">
    <location>
        <begin position="280"/>
        <end position="288"/>
    </location>
</feature>
<feature type="helix" evidence="10">
    <location>
        <begin position="292"/>
        <end position="305"/>
    </location>
</feature>
<feature type="helix" evidence="10">
    <location>
        <begin position="310"/>
        <end position="329"/>
    </location>
</feature>
<gene>
    <name evidence="8" type="primary">fliG</name>
    <name type="ordered locus">C694_01785</name>
    <name type="ordered locus">HP_0352</name>
</gene>
<protein>
    <recommendedName>
        <fullName evidence="1 7">Flagellar motor switch protein FliG</fullName>
    </recommendedName>
    <alternativeName>
        <fullName evidence="8">Flagellar motor switch protein G</fullName>
    </alternativeName>
</protein>
<keyword id="KW-0002">3D-structure</keyword>
<keyword id="KW-0975">Bacterial flagellum</keyword>
<keyword id="KW-0997">Cell inner membrane</keyword>
<keyword id="KW-1003">Cell membrane</keyword>
<keyword id="KW-0145">Chemotaxis</keyword>
<keyword id="KW-0283">Flagellar rotation</keyword>
<keyword id="KW-0472">Membrane</keyword>
<keyword id="KW-1185">Reference proteome</keyword>
<proteinExistence type="evidence at protein level"/>
<organism>
    <name type="scientific">Helicobacter pylori (strain ATCC 700392 / 26695)</name>
    <name type="common">Campylobacter pylori</name>
    <dbReference type="NCBI Taxonomy" id="85962"/>
    <lineage>
        <taxon>Bacteria</taxon>
        <taxon>Pseudomonadati</taxon>
        <taxon>Campylobacterota</taxon>
        <taxon>Epsilonproteobacteria</taxon>
        <taxon>Campylobacterales</taxon>
        <taxon>Helicobacteraceae</taxon>
        <taxon>Helicobacter</taxon>
    </lineage>
</organism>
<name>FLIG_HELPY</name>
<comment type="function">
    <text evidence="1 3 4 5">One of the proteins that forms a switch complex that is proposed to be located at the base of the basal body. This complex interacts with chemotaxis proteins (such as CheY) in addition to contacting components of the motor that determine the direction of flagellar rotation. Required for flagellum synthesis and motility. In H.pylori four flagellar switch proteins are encoded, FliG, FliM, FliN and FliY.</text>
</comment>
<comment type="subcellular location">
    <subcellularLocation>
        <location evidence="1">Cell inner membrane</location>
        <topology evidence="1">Peripheral membrane protein</topology>
        <orientation evidence="1">Cytoplasmic side</orientation>
    </subcellularLocation>
    <subcellularLocation>
        <location evidence="1">Bacterial flagellum basal body</location>
    </subcellularLocation>
</comment>
<comment type="disruption phenotype">
    <text evidence="3">Nonflagellate. Forms dense colonies without swarming in contrast to the wild-type which forms diffuse colonies with large, swarming halos. Expression of flagellins FlaA and FlaB and the hook protein FlgE greatly reduced.</text>
</comment>
<comment type="similarity">
    <text evidence="2">Belongs to the FliG family.</text>
</comment>